<evidence type="ECO:0000255" key="1"/>
<evidence type="ECO:0000305" key="2"/>
<organism>
    <name type="scientific">Archaeoglobus fulgidus (strain ATCC 49558 / DSM 4304 / JCM 9628 / NBRC 100126 / VC-16)</name>
    <dbReference type="NCBI Taxonomy" id="224325"/>
    <lineage>
        <taxon>Archaea</taxon>
        <taxon>Methanobacteriati</taxon>
        <taxon>Methanobacteriota</taxon>
        <taxon>Archaeoglobi</taxon>
        <taxon>Archaeoglobales</taxon>
        <taxon>Archaeoglobaceae</taxon>
        <taxon>Archaeoglobus</taxon>
    </lineage>
</organism>
<feature type="chain" id="PRO_0000128099" description="Uncharacterized protein AF_2132">
    <location>
        <begin position="1"/>
        <end position="244"/>
    </location>
</feature>
<feature type="transmembrane region" description="Helical" evidence="1">
    <location>
        <begin position="5"/>
        <end position="27"/>
    </location>
</feature>
<feature type="transmembrane region" description="Helical" evidence="1">
    <location>
        <begin position="37"/>
        <end position="59"/>
    </location>
</feature>
<feature type="transmembrane region" description="Helical" evidence="1">
    <location>
        <begin position="87"/>
        <end position="106"/>
    </location>
</feature>
<feature type="transmembrane region" description="Helical" evidence="1">
    <location>
        <begin position="116"/>
        <end position="138"/>
    </location>
</feature>
<feature type="transmembrane region" description="Helical" evidence="1">
    <location>
        <begin position="159"/>
        <end position="181"/>
    </location>
</feature>
<feature type="transmembrane region" description="Helical" evidence="1">
    <location>
        <begin position="196"/>
        <end position="218"/>
    </location>
</feature>
<name>Y2132_ARCFU</name>
<proteinExistence type="predicted"/>
<keyword id="KW-1003">Cell membrane</keyword>
<keyword id="KW-0472">Membrane</keyword>
<keyword id="KW-1185">Reference proteome</keyword>
<keyword id="KW-0812">Transmembrane</keyword>
<keyword id="KW-1133">Transmembrane helix</keyword>
<dbReference type="EMBL" id="AE000782">
    <property type="protein sequence ID" value="AAB89120.1"/>
    <property type="molecule type" value="Genomic_DNA"/>
</dbReference>
<dbReference type="PIR" id="D69516">
    <property type="entry name" value="D69516"/>
</dbReference>
<dbReference type="RefSeq" id="WP_010879623.1">
    <property type="nucleotide sequence ID" value="NC_000917.1"/>
</dbReference>
<dbReference type="SMR" id="O28148"/>
<dbReference type="STRING" id="224325.AF_2132"/>
<dbReference type="PaxDb" id="224325-AF_2132"/>
<dbReference type="EnsemblBacteria" id="AAB89120">
    <property type="protein sequence ID" value="AAB89120"/>
    <property type="gene ID" value="AF_2132"/>
</dbReference>
<dbReference type="KEGG" id="afu:AF_2132"/>
<dbReference type="eggNOG" id="arCOG07090">
    <property type="taxonomic scope" value="Archaea"/>
</dbReference>
<dbReference type="HOGENOM" id="CLU_1136010_0_0_2"/>
<dbReference type="Proteomes" id="UP000002199">
    <property type="component" value="Chromosome"/>
</dbReference>
<dbReference type="GO" id="GO:0005886">
    <property type="term" value="C:plasma membrane"/>
    <property type="evidence" value="ECO:0007669"/>
    <property type="project" value="UniProtKB-SubCell"/>
</dbReference>
<reference key="1">
    <citation type="journal article" date="1997" name="Nature">
        <title>The complete genome sequence of the hyperthermophilic, sulphate-reducing archaeon Archaeoglobus fulgidus.</title>
        <authorList>
            <person name="Klenk H.-P."/>
            <person name="Clayton R.A."/>
            <person name="Tomb J.-F."/>
            <person name="White O."/>
            <person name="Nelson K.E."/>
            <person name="Ketchum K.A."/>
            <person name="Dodson R.J."/>
            <person name="Gwinn M.L."/>
            <person name="Hickey E.K."/>
            <person name="Peterson J.D."/>
            <person name="Richardson D.L."/>
            <person name="Kerlavage A.R."/>
            <person name="Graham D.E."/>
            <person name="Kyrpides N.C."/>
            <person name="Fleischmann R.D."/>
            <person name="Quackenbush J."/>
            <person name="Lee N.H."/>
            <person name="Sutton G.G."/>
            <person name="Gill S.R."/>
            <person name="Kirkness E.F."/>
            <person name="Dougherty B.A."/>
            <person name="McKenney K."/>
            <person name="Adams M.D."/>
            <person name="Loftus B.J."/>
            <person name="Peterson S.N."/>
            <person name="Reich C.I."/>
            <person name="McNeil L.K."/>
            <person name="Badger J.H."/>
            <person name="Glodek A."/>
            <person name="Zhou L."/>
            <person name="Overbeek R."/>
            <person name="Gocayne J.D."/>
            <person name="Weidman J.F."/>
            <person name="McDonald L.A."/>
            <person name="Utterback T.R."/>
            <person name="Cotton M.D."/>
            <person name="Spriggs T."/>
            <person name="Artiach P."/>
            <person name="Kaine B.P."/>
            <person name="Sykes S.M."/>
            <person name="Sadow P.W."/>
            <person name="D'Andrea K.P."/>
            <person name="Bowman C."/>
            <person name="Fujii C."/>
            <person name="Garland S.A."/>
            <person name="Mason T.M."/>
            <person name="Olsen G.J."/>
            <person name="Fraser C.M."/>
            <person name="Smith H.O."/>
            <person name="Woese C.R."/>
            <person name="Venter J.C."/>
        </authorList>
    </citation>
    <scope>NUCLEOTIDE SEQUENCE [LARGE SCALE GENOMIC DNA]</scope>
    <source>
        <strain>ATCC 49558 / DSM 4304 / JCM 9628 / NBRC 100126 / VC-16</strain>
    </source>
</reference>
<gene>
    <name type="ordered locus">AF_2132</name>
</gene>
<sequence>MNKGKFALLFTFAACFAVIVFFWLLAVPPENFTADRIVMVLLISPIFAILLAFNLSRFLKQHGYSLRQVHVALEQNIADFIYEFQRLVFIHLMPIAFLGALIFYYGEFTPAIAEFLSLFALIFALSPLLFLGISFFVAMLQVYERVRKKSLLRANFFNFWIWIHLFVILLIIISKVLVQPSELPFQKAYFKALNDGVFNLLIIATMNAIFGVTGRMVAREKFPILLHLSIPLVNSFVAVKILMA</sequence>
<protein>
    <recommendedName>
        <fullName>Uncharacterized protein AF_2132</fullName>
    </recommendedName>
</protein>
<comment type="subcellular location">
    <subcellularLocation>
        <location evidence="2">Cell membrane</location>
        <topology evidence="2">Multi-pass membrane protein</topology>
    </subcellularLocation>
</comment>
<accession>O28148</accession>